<feature type="signal peptide" evidence="1">
    <location>
        <begin position="1"/>
        <end position="18"/>
    </location>
</feature>
<feature type="propeptide" id="PRO_0000026511" evidence="1">
    <location>
        <begin position="19"/>
        <end position="29"/>
    </location>
</feature>
<feature type="chain" id="PRO_0000026512" description="Hemoglobinase">
    <location>
        <begin position="30"/>
        <end position="285"/>
    </location>
</feature>
<feature type="propeptide" id="PRO_0000026513" evidence="1">
    <location>
        <begin position="286"/>
        <end position="423"/>
    </location>
</feature>
<feature type="region of interest" description="Disordered" evidence="2">
    <location>
        <begin position="286"/>
        <end position="307"/>
    </location>
</feature>
<feature type="compositionally biased region" description="Basic and acidic residues" evidence="2">
    <location>
        <begin position="289"/>
        <end position="305"/>
    </location>
</feature>
<feature type="active site" evidence="1">
    <location>
        <position position="145"/>
    </location>
</feature>
<feature type="active site" evidence="1">
    <location>
        <position position="186"/>
    </location>
</feature>
<gene>
    <name type="primary">HAEM</name>
</gene>
<name>HGLB_SCHJA</name>
<protein>
    <recommendedName>
        <fullName>Hemoglobinase</fullName>
        <ecNumber>3.4.22.34</ecNumber>
    </recommendedName>
    <alternativeName>
        <fullName>Antigen Sj32</fullName>
    </alternativeName>
</protein>
<reference key="1">
    <citation type="journal article" date="1994" name="Trop. Med. Parasitol.">
        <title>cDNA sequences of Schistosoma japonicum coding for two cathepsin B-like proteins and Sj32.</title>
        <authorList>
            <person name="Merckelbach A."/>
            <person name="Hasse S."/>
            <person name="Dell R."/>
            <person name="Eschlbeck A."/>
            <person name="Ruppel A."/>
        </authorList>
    </citation>
    <scope>NUCLEOTIDE SEQUENCE [MRNA]</scope>
    <source>
        <strain>Chinese</strain>
    </source>
</reference>
<accession>P42665</accession>
<evidence type="ECO:0000255" key="1"/>
<evidence type="ECO:0000256" key="2">
    <source>
        <dbReference type="SAM" id="MobiDB-lite"/>
    </source>
</evidence>
<evidence type="ECO:0000305" key="3"/>
<keyword id="KW-0378">Hydrolase</keyword>
<keyword id="KW-0645">Protease</keyword>
<keyword id="KW-0732">Signal</keyword>
<keyword id="KW-0788">Thiol protease</keyword>
<comment type="function">
    <text>This protease is used by the parasite for degradation of the host globin.</text>
</comment>
<comment type="catalytic activity">
    <reaction>
        <text>Hydrolysis of proteins and small molecule substrates at -Asn-|-Xaa- bonds.</text>
        <dbReference type="EC" id="3.4.22.34"/>
    </reaction>
</comment>
<comment type="tissue specificity">
    <text>Gut.</text>
</comment>
<comment type="similarity">
    <text evidence="3">Belongs to the peptidase C13 family.</text>
</comment>
<proteinExistence type="evidence at transcript level"/>
<organism>
    <name type="scientific">Schistosoma japonicum</name>
    <name type="common">Blood fluke</name>
    <dbReference type="NCBI Taxonomy" id="6182"/>
    <lineage>
        <taxon>Eukaryota</taxon>
        <taxon>Metazoa</taxon>
        <taxon>Spiralia</taxon>
        <taxon>Lophotrochozoa</taxon>
        <taxon>Platyhelminthes</taxon>
        <taxon>Trematoda</taxon>
        <taxon>Digenea</taxon>
        <taxon>Strigeidida</taxon>
        <taxon>Schistosomatoidea</taxon>
        <taxon>Schistosomatidae</taxon>
        <taxon>Schistosoma</taxon>
    </lineage>
</organism>
<dbReference type="EC" id="3.4.22.34"/>
<dbReference type="EMBL" id="X70967">
    <property type="protein sequence ID" value="CAA50304.1"/>
    <property type="molecule type" value="mRNA"/>
</dbReference>
<dbReference type="PIR" id="S31908">
    <property type="entry name" value="S31908"/>
</dbReference>
<dbReference type="SMR" id="P42665"/>
<dbReference type="MEROPS" id="C13.007"/>
<dbReference type="BRENDA" id="3.4.22.34">
    <property type="organism ID" value="5607"/>
</dbReference>
<dbReference type="GO" id="GO:0005773">
    <property type="term" value="C:vacuole"/>
    <property type="evidence" value="ECO:0007669"/>
    <property type="project" value="GOC"/>
</dbReference>
<dbReference type="GO" id="GO:0004197">
    <property type="term" value="F:cysteine-type endopeptidase activity"/>
    <property type="evidence" value="ECO:0007669"/>
    <property type="project" value="UniProtKB-EC"/>
</dbReference>
<dbReference type="GO" id="GO:0051603">
    <property type="term" value="P:proteolysis involved in protein catabolic process"/>
    <property type="evidence" value="ECO:0007669"/>
    <property type="project" value="InterPro"/>
</dbReference>
<dbReference type="GO" id="GO:0006624">
    <property type="term" value="P:vacuolar protein processing"/>
    <property type="evidence" value="ECO:0007669"/>
    <property type="project" value="TreeGrafter"/>
</dbReference>
<dbReference type="CDD" id="cd21115">
    <property type="entry name" value="legumain_C"/>
    <property type="match status" value="1"/>
</dbReference>
<dbReference type="FunFam" id="3.40.50.1460:FF:000006">
    <property type="entry name" value="Legumain"/>
    <property type="match status" value="1"/>
</dbReference>
<dbReference type="Gene3D" id="1.10.132.130">
    <property type="match status" value="1"/>
</dbReference>
<dbReference type="Gene3D" id="3.40.50.1460">
    <property type="match status" value="1"/>
</dbReference>
<dbReference type="InterPro" id="IPR043577">
    <property type="entry name" value="AE"/>
</dbReference>
<dbReference type="InterPro" id="IPR048501">
    <property type="entry name" value="Legum_prodom"/>
</dbReference>
<dbReference type="InterPro" id="IPR046427">
    <property type="entry name" value="Legumain_prodom_sf"/>
</dbReference>
<dbReference type="InterPro" id="IPR001096">
    <property type="entry name" value="Peptidase_C13"/>
</dbReference>
<dbReference type="PANTHER" id="PTHR12000">
    <property type="entry name" value="HEMOGLOBINASE FAMILY MEMBER"/>
    <property type="match status" value="1"/>
</dbReference>
<dbReference type="PANTHER" id="PTHR12000:SF42">
    <property type="entry name" value="LEGUMAIN"/>
    <property type="match status" value="1"/>
</dbReference>
<dbReference type="Pfam" id="PF01650">
    <property type="entry name" value="Peptidase_C13"/>
    <property type="match status" value="1"/>
</dbReference>
<dbReference type="PIRSF" id="PIRSF500139">
    <property type="entry name" value="AE"/>
    <property type="match status" value="1"/>
</dbReference>
<dbReference type="PIRSF" id="PIRSF019663">
    <property type="entry name" value="Legumain"/>
    <property type="match status" value="1"/>
</dbReference>
<dbReference type="PRINTS" id="PR00776">
    <property type="entry name" value="HEMOGLOBNASE"/>
</dbReference>
<sequence length="423" mass="48938">MFYSIFFIHILRIVLVDCNEYSEENVDDRHKWAVLVAGSNGFENYRHQADVCHAYHVLLSKGVKPEHIITFMYDDIAHNKENPFPGKIFNDYRHKDYYKGVVIDYKGKKVNPKTFLQVLKGDKRAGGKVLKSGKNDDVFIYFTDHGAPGILAFPDDDLHAKPFINTLKYLRQHRRYSKLVIYVEACESGSMFAGLLPTDINIYATTAARPDESSYATFCDDPRISSCLADLYSYDWIVDSEKHQLTQRTLDQQYKEVKFETNLSHVQRYGDKKMGKLYLSEFQGSRKKASTEHDEPPMKPKDSIPSRDIPLHTLHRRIMMANNMNDKTLLMKILGLKLKRRDLIKDTMEVIDQFMFNVKQPNSNATIDETMDCIEVVYKEFQSKCFKIQQAPEITGYLSTLYNYCQKGYSAENINGVIRKVCG</sequence>